<feature type="chain" id="PRO_1000058796" description="Adenylate kinase">
    <location>
        <begin position="1"/>
        <end position="220"/>
    </location>
</feature>
<feature type="region of interest" description="NMP" evidence="1">
    <location>
        <begin position="30"/>
        <end position="59"/>
    </location>
</feature>
<feature type="region of interest" description="LID" evidence="1">
    <location>
        <begin position="122"/>
        <end position="159"/>
    </location>
</feature>
<feature type="binding site" evidence="1">
    <location>
        <begin position="10"/>
        <end position="15"/>
    </location>
    <ligand>
        <name>ATP</name>
        <dbReference type="ChEBI" id="CHEBI:30616"/>
    </ligand>
</feature>
<feature type="binding site" evidence="1">
    <location>
        <position position="31"/>
    </location>
    <ligand>
        <name>AMP</name>
        <dbReference type="ChEBI" id="CHEBI:456215"/>
    </ligand>
</feature>
<feature type="binding site" evidence="1">
    <location>
        <position position="36"/>
    </location>
    <ligand>
        <name>AMP</name>
        <dbReference type="ChEBI" id="CHEBI:456215"/>
    </ligand>
</feature>
<feature type="binding site" evidence="1">
    <location>
        <begin position="57"/>
        <end position="59"/>
    </location>
    <ligand>
        <name>AMP</name>
        <dbReference type="ChEBI" id="CHEBI:456215"/>
    </ligand>
</feature>
<feature type="binding site" evidence="1">
    <location>
        <begin position="85"/>
        <end position="88"/>
    </location>
    <ligand>
        <name>AMP</name>
        <dbReference type="ChEBI" id="CHEBI:456215"/>
    </ligand>
</feature>
<feature type="binding site" evidence="1">
    <location>
        <position position="92"/>
    </location>
    <ligand>
        <name>AMP</name>
        <dbReference type="ChEBI" id="CHEBI:456215"/>
    </ligand>
</feature>
<feature type="binding site" evidence="1">
    <location>
        <position position="123"/>
    </location>
    <ligand>
        <name>ATP</name>
        <dbReference type="ChEBI" id="CHEBI:30616"/>
    </ligand>
</feature>
<feature type="binding site" evidence="1">
    <location>
        <begin position="132"/>
        <end position="133"/>
    </location>
    <ligand>
        <name>ATP</name>
        <dbReference type="ChEBI" id="CHEBI:30616"/>
    </ligand>
</feature>
<feature type="binding site" evidence="1">
    <location>
        <position position="156"/>
    </location>
    <ligand>
        <name>AMP</name>
        <dbReference type="ChEBI" id="CHEBI:456215"/>
    </ligand>
</feature>
<feature type="binding site" evidence="1">
    <location>
        <position position="167"/>
    </location>
    <ligand>
        <name>AMP</name>
        <dbReference type="ChEBI" id="CHEBI:456215"/>
    </ligand>
</feature>
<feature type="binding site" evidence="1">
    <location>
        <position position="206"/>
    </location>
    <ligand>
        <name>ATP</name>
        <dbReference type="ChEBI" id="CHEBI:30616"/>
    </ligand>
</feature>
<protein>
    <recommendedName>
        <fullName evidence="1">Adenylate kinase</fullName>
        <shortName evidence="1">AK</shortName>
        <ecNumber evidence="1">2.7.4.3</ecNumber>
    </recommendedName>
    <alternativeName>
        <fullName evidence="1">ATP-AMP transphosphorylase</fullName>
    </alternativeName>
    <alternativeName>
        <fullName evidence="1">ATP:AMP phosphotransferase</fullName>
    </alternativeName>
    <alternativeName>
        <fullName evidence="1">Adenylate monophosphate kinase</fullName>
    </alternativeName>
</protein>
<accession>A0K9X1</accession>
<evidence type="ECO:0000255" key="1">
    <source>
        <dbReference type="HAMAP-Rule" id="MF_00235"/>
    </source>
</evidence>
<keyword id="KW-0067">ATP-binding</keyword>
<keyword id="KW-0963">Cytoplasm</keyword>
<keyword id="KW-0418">Kinase</keyword>
<keyword id="KW-0545">Nucleotide biosynthesis</keyword>
<keyword id="KW-0547">Nucleotide-binding</keyword>
<keyword id="KW-0808">Transferase</keyword>
<gene>
    <name evidence="1" type="primary">adk</name>
    <name type="ordered locus">Bcen2424_2548</name>
</gene>
<name>KAD_BURCH</name>
<comment type="function">
    <text evidence="1">Catalyzes the reversible transfer of the terminal phosphate group between ATP and AMP. Plays an important role in cellular energy homeostasis and in adenine nucleotide metabolism.</text>
</comment>
<comment type="catalytic activity">
    <reaction evidence="1">
        <text>AMP + ATP = 2 ADP</text>
        <dbReference type="Rhea" id="RHEA:12973"/>
        <dbReference type="ChEBI" id="CHEBI:30616"/>
        <dbReference type="ChEBI" id="CHEBI:456215"/>
        <dbReference type="ChEBI" id="CHEBI:456216"/>
        <dbReference type="EC" id="2.7.4.3"/>
    </reaction>
</comment>
<comment type="pathway">
    <text evidence="1">Purine metabolism; AMP biosynthesis via salvage pathway; AMP from ADP: step 1/1.</text>
</comment>
<comment type="subunit">
    <text evidence="1">Monomer.</text>
</comment>
<comment type="subcellular location">
    <subcellularLocation>
        <location evidence="1">Cytoplasm</location>
    </subcellularLocation>
</comment>
<comment type="domain">
    <text evidence="1">Consists of three domains, a large central CORE domain and two small peripheral domains, NMPbind and LID, which undergo movements during catalysis. The LID domain closes over the site of phosphoryl transfer upon ATP binding. Assembling and dissambling the active center during each catalytic cycle provides an effective means to prevent ATP hydrolysis.</text>
</comment>
<comment type="similarity">
    <text evidence="1">Belongs to the adenylate kinase family.</text>
</comment>
<reference key="1">
    <citation type="submission" date="2006-08" db="EMBL/GenBank/DDBJ databases">
        <title>Complete sequence of chromosome 1 of Burkholderia cenocepacia HI2424.</title>
        <authorList>
            <person name="Copeland A."/>
            <person name="Lucas S."/>
            <person name="Lapidus A."/>
            <person name="Barry K."/>
            <person name="Detter J.C."/>
            <person name="Glavina del Rio T."/>
            <person name="Hammon N."/>
            <person name="Israni S."/>
            <person name="Pitluck S."/>
            <person name="Chain P."/>
            <person name="Malfatti S."/>
            <person name="Shin M."/>
            <person name="Vergez L."/>
            <person name="Schmutz J."/>
            <person name="Larimer F."/>
            <person name="Land M."/>
            <person name="Hauser L."/>
            <person name="Kyrpides N."/>
            <person name="Kim E."/>
            <person name="LiPuma J.J."/>
            <person name="Gonzalez C.F."/>
            <person name="Konstantinidis K."/>
            <person name="Tiedje J.M."/>
            <person name="Richardson P."/>
        </authorList>
    </citation>
    <scope>NUCLEOTIDE SEQUENCE [LARGE SCALE GENOMIC DNA]</scope>
    <source>
        <strain>HI2424</strain>
    </source>
</reference>
<dbReference type="EC" id="2.7.4.3" evidence="1"/>
<dbReference type="EMBL" id="CP000458">
    <property type="protein sequence ID" value="ABK09298.1"/>
    <property type="molecule type" value="Genomic_DNA"/>
</dbReference>
<dbReference type="RefSeq" id="WP_006482212.1">
    <property type="nucleotide sequence ID" value="NC_008542.1"/>
</dbReference>
<dbReference type="SMR" id="A0K9X1"/>
<dbReference type="GeneID" id="83049360"/>
<dbReference type="KEGG" id="bch:Bcen2424_2548"/>
<dbReference type="HOGENOM" id="CLU_032354_1_2_4"/>
<dbReference type="UniPathway" id="UPA00588">
    <property type="reaction ID" value="UER00649"/>
</dbReference>
<dbReference type="GO" id="GO:0005737">
    <property type="term" value="C:cytoplasm"/>
    <property type="evidence" value="ECO:0007669"/>
    <property type="project" value="UniProtKB-SubCell"/>
</dbReference>
<dbReference type="GO" id="GO:0004017">
    <property type="term" value="F:adenylate kinase activity"/>
    <property type="evidence" value="ECO:0007669"/>
    <property type="project" value="UniProtKB-UniRule"/>
</dbReference>
<dbReference type="GO" id="GO:0005524">
    <property type="term" value="F:ATP binding"/>
    <property type="evidence" value="ECO:0007669"/>
    <property type="project" value="UniProtKB-UniRule"/>
</dbReference>
<dbReference type="GO" id="GO:0044209">
    <property type="term" value="P:AMP salvage"/>
    <property type="evidence" value="ECO:0007669"/>
    <property type="project" value="UniProtKB-UniRule"/>
</dbReference>
<dbReference type="CDD" id="cd01428">
    <property type="entry name" value="ADK"/>
    <property type="match status" value="1"/>
</dbReference>
<dbReference type="FunFam" id="3.40.50.300:FF:000106">
    <property type="entry name" value="Adenylate kinase mitochondrial"/>
    <property type="match status" value="1"/>
</dbReference>
<dbReference type="Gene3D" id="3.40.50.300">
    <property type="entry name" value="P-loop containing nucleotide triphosphate hydrolases"/>
    <property type="match status" value="1"/>
</dbReference>
<dbReference type="HAMAP" id="MF_00235">
    <property type="entry name" value="Adenylate_kinase_Adk"/>
    <property type="match status" value="1"/>
</dbReference>
<dbReference type="InterPro" id="IPR006259">
    <property type="entry name" value="Adenyl_kin_sub"/>
</dbReference>
<dbReference type="InterPro" id="IPR000850">
    <property type="entry name" value="Adenylat/UMP-CMP_kin"/>
</dbReference>
<dbReference type="InterPro" id="IPR033690">
    <property type="entry name" value="Adenylat_kinase_CS"/>
</dbReference>
<dbReference type="InterPro" id="IPR007862">
    <property type="entry name" value="Adenylate_kinase_lid-dom"/>
</dbReference>
<dbReference type="InterPro" id="IPR027417">
    <property type="entry name" value="P-loop_NTPase"/>
</dbReference>
<dbReference type="NCBIfam" id="TIGR01351">
    <property type="entry name" value="adk"/>
    <property type="match status" value="1"/>
</dbReference>
<dbReference type="NCBIfam" id="NF001379">
    <property type="entry name" value="PRK00279.1-1"/>
    <property type="match status" value="1"/>
</dbReference>
<dbReference type="NCBIfam" id="NF001380">
    <property type="entry name" value="PRK00279.1-2"/>
    <property type="match status" value="1"/>
</dbReference>
<dbReference type="NCBIfam" id="NF001381">
    <property type="entry name" value="PRK00279.1-3"/>
    <property type="match status" value="1"/>
</dbReference>
<dbReference type="NCBIfam" id="NF011100">
    <property type="entry name" value="PRK14527.1"/>
    <property type="match status" value="1"/>
</dbReference>
<dbReference type="PANTHER" id="PTHR23359">
    <property type="entry name" value="NUCLEOTIDE KINASE"/>
    <property type="match status" value="1"/>
</dbReference>
<dbReference type="Pfam" id="PF00406">
    <property type="entry name" value="ADK"/>
    <property type="match status" value="1"/>
</dbReference>
<dbReference type="Pfam" id="PF05191">
    <property type="entry name" value="ADK_lid"/>
    <property type="match status" value="1"/>
</dbReference>
<dbReference type="PRINTS" id="PR00094">
    <property type="entry name" value="ADENYLTKNASE"/>
</dbReference>
<dbReference type="SUPFAM" id="SSF52540">
    <property type="entry name" value="P-loop containing nucleoside triphosphate hydrolases"/>
    <property type="match status" value="1"/>
</dbReference>
<dbReference type="PROSITE" id="PS00113">
    <property type="entry name" value="ADENYLATE_KINASE"/>
    <property type="match status" value="1"/>
</dbReference>
<sequence length="220" mass="24238">MRLILLGAPGAGKGTQANFIKEKFGIPQISTGDMLRAAVKAGTPLGVEAKGYMDAGKLVPDALIIGLVKERLKESDCANGYLFDGFPRTIAQADAMKEAGVAIDYVLEIDVPFSEIIERMSGRRTHPASGRTYHVKFNPPKVEGHDDVTGEPLIQRDDDKEETVKKRLEVYEAQTKPLITYYGDWAQRGEENGLKAPQYRKISGLGTVDEIRERAFDALK</sequence>
<organism>
    <name type="scientific">Burkholderia cenocepacia (strain HI2424)</name>
    <dbReference type="NCBI Taxonomy" id="331272"/>
    <lineage>
        <taxon>Bacteria</taxon>
        <taxon>Pseudomonadati</taxon>
        <taxon>Pseudomonadota</taxon>
        <taxon>Betaproteobacteria</taxon>
        <taxon>Burkholderiales</taxon>
        <taxon>Burkholderiaceae</taxon>
        <taxon>Burkholderia</taxon>
        <taxon>Burkholderia cepacia complex</taxon>
    </lineage>
</organism>
<proteinExistence type="inferred from homology"/>